<geneLocation type="chloroplast"/>
<reference key="1">
    <citation type="journal article" date="2008" name="Nucleic Acids Res.">
        <title>The complete nucleotide sequences of the five genetically distinct plastid genomes of Oenothera, subsection Oenothera: I. Sequence evaluation and plastome evolution.</title>
        <authorList>
            <person name="Greiner S."/>
            <person name="Wang X."/>
            <person name="Rauwolf U."/>
            <person name="Silber M.V."/>
            <person name="Mayer K."/>
            <person name="Meurer J."/>
            <person name="Haberer G."/>
            <person name="Herrmann R.G."/>
        </authorList>
    </citation>
    <scope>NUCLEOTIDE SEQUENCE [LARGE SCALE GENOMIC DNA]</scope>
    <source>
        <strain>cv. Douthat 1</strain>
    </source>
</reference>
<protein>
    <recommendedName>
        <fullName evidence="1">Photosystem II reaction center protein I</fullName>
        <shortName evidence="1">PSII-I</shortName>
    </recommendedName>
    <alternativeName>
        <fullName evidence="1">PSII 4.8 kDa protein</fullName>
    </alternativeName>
</protein>
<feature type="chain" id="PRO_0000353240" description="Photosystem II reaction center protein I">
    <location>
        <begin position="1"/>
        <end position="36"/>
    </location>
</feature>
<feature type="transmembrane region" description="Helical" evidence="1">
    <location>
        <begin position="4"/>
        <end position="24"/>
    </location>
</feature>
<gene>
    <name evidence="1" type="primary">psbI</name>
</gene>
<proteinExistence type="inferred from homology"/>
<keyword id="KW-0150">Chloroplast</keyword>
<keyword id="KW-0472">Membrane</keyword>
<keyword id="KW-0602">Photosynthesis</keyword>
<keyword id="KW-0604">Photosystem II</keyword>
<keyword id="KW-0934">Plastid</keyword>
<keyword id="KW-0674">Reaction center</keyword>
<keyword id="KW-0793">Thylakoid</keyword>
<keyword id="KW-0812">Transmembrane</keyword>
<keyword id="KW-1133">Transmembrane helix</keyword>
<sequence length="36" mass="4168">MLTLKLFVYTVVIFFVSLFIFGFLSNDPGRNPGREE</sequence>
<organism>
    <name type="scientific">Oenothera argillicola</name>
    <name type="common">Appalachian evening primrose</name>
    <dbReference type="NCBI Taxonomy" id="3940"/>
    <lineage>
        <taxon>Eukaryota</taxon>
        <taxon>Viridiplantae</taxon>
        <taxon>Streptophyta</taxon>
        <taxon>Embryophyta</taxon>
        <taxon>Tracheophyta</taxon>
        <taxon>Spermatophyta</taxon>
        <taxon>Magnoliopsida</taxon>
        <taxon>eudicotyledons</taxon>
        <taxon>Gunneridae</taxon>
        <taxon>Pentapetalae</taxon>
        <taxon>rosids</taxon>
        <taxon>malvids</taxon>
        <taxon>Myrtales</taxon>
        <taxon>Onagraceae</taxon>
        <taxon>Onagroideae</taxon>
        <taxon>Onagreae</taxon>
        <taxon>Oenothera</taxon>
    </lineage>
</organism>
<evidence type="ECO:0000255" key="1">
    <source>
        <dbReference type="HAMAP-Rule" id="MF_01316"/>
    </source>
</evidence>
<comment type="function">
    <text evidence="1">One of the components of the core complex of photosystem II (PSII), required for its stability and/or assembly. PSII is a light-driven water:plastoquinone oxidoreductase that uses light energy to abstract electrons from H(2)O, generating O(2) and a proton gradient subsequently used for ATP formation. It consists of a core antenna complex that captures photons, and an electron transfer chain that converts photonic excitation into a charge separation.</text>
</comment>
<comment type="subunit">
    <text evidence="1">PSII is composed of 1 copy each of membrane proteins PsbA, PsbB, PsbC, PsbD, PsbE, PsbF, PsbH, PsbI, PsbJ, PsbK, PsbL, PsbM, PsbT, PsbX, PsbY, PsbZ, Psb30/Ycf12, at least 3 peripheral proteins of the oxygen-evolving complex and a large number of cofactors. It forms dimeric complexes.</text>
</comment>
<comment type="subcellular location">
    <subcellularLocation>
        <location evidence="1">Plastid</location>
        <location evidence="1">Chloroplast thylakoid membrane</location>
        <topology evidence="1">Single-pass membrane protein</topology>
    </subcellularLocation>
</comment>
<comment type="similarity">
    <text evidence="1">Belongs to the PsbI family.</text>
</comment>
<dbReference type="EMBL" id="EU262887">
    <property type="protein sequence ID" value="ABW98711.1"/>
    <property type="molecule type" value="Genomic_DNA"/>
</dbReference>
<dbReference type="RefSeq" id="YP_001687144.1">
    <property type="nucleotide sequence ID" value="NC_010358.2"/>
</dbReference>
<dbReference type="SMR" id="B0Z4N3"/>
<dbReference type="GeneID" id="5951829"/>
<dbReference type="GO" id="GO:0009535">
    <property type="term" value="C:chloroplast thylakoid membrane"/>
    <property type="evidence" value="ECO:0007669"/>
    <property type="project" value="UniProtKB-SubCell"/>
</dbReference>
<dbReference type="GO" id="GO:0009539">
    <property type="term" value="C:photosystem II reaction center"/>
    <property type="evidence" value="ECO:0007669"/>
    <property type="project" value="InterPro"/>
</dbReference>
<dbReference type="GO" id="GO:0015979">
    <property type="term" value="P:photosynthesis"/>
    <property type="evidence" value="ECO:0007669"/>
    <property type="project" value="UniProtKB-UniRule"/>
</dbReference>
<dbReference type="HAMAP" id="MF_01316">
    <property type="entry name" value="PSII_PsbI"/>
    <property type="match status" value="1"/>
</dbReference>
<dbReference type="InterPro" id="IPR003686">
    <property type="entry name" value="PSII_PsbI"/>
</dbReference>
<dbReference type="InterPro" id="IPR037271">
    <property type="entry name" value="PSII_PsbI_sf"/>
</dbReference>
<dbReference type="NCBIfam" id="NF002735">
    <property type="entry name" value="PRK02655.1"/>
    <property type="match status" value="1"/>
</dbReference>
<dbReference type="PANTHER" id="PTHR35772">
    <property type="entry name" value="PHOTOSYSTEM II REACTION CENTER PROTEIN I"/>
    <property type="match status" value="1"/>
</dbReference>
<dbReference type="PANTHER" id="PTHR35772:SF1">
    <property type="entry name" value="PHOTOSYSTEM II REACTION CENTER PROTEIN I"/>
    <property type="match status" value="1"/>
</dbReference>
<dbReference type="Pfam" id="PF02532">
    <property type="entry name" value="PsbI"/>
    <property type="match status" value="1"/>
</dbReference>
<dbReference type="SUPFAM" id="SSF161041">
    <property type="entry name" value="Photosystem II reaction center protein I, PsbI"/>
    <property type="match status" value="1"/>
</dbReference>
<name>PSBI_OENAR</name>
<accession>B0Z4N3</accession>